<accession>Q9FFN7</accession>
<accession>A8MRH8</accession>
<name>DGK2_ARATH</name>
<sequence>MMEVGFSLIQWLISSGADSPFIFGWLVTGSVGLLAVIYTFLKWQKKTSLNWVKAAAREKKKVWKRLRVPLSHHQWTDDYGYGQQPSTCCVCLYSLVPGQNVSNKASLSIPVHRCAVCGVAAHFYCSSSAAKDCKCVAQAGSDHVRHHWSERWVNMDDNADMTAFCFYCDEPCGIPFIEASPMWHCLWCQRLIHVKCHMIMSKESGDACDLGSLRRVILSPVHVKLNEANGVDGVLTTIKNELASIRGHVRRKRHRGKNGNGQSLNGKLLEDSVSDPVKTVVNGLVVKKLRRDRSIDCLKQVSDMPNAKGLQNGIGGHKRNKSAALNFMKKFSLVDLPPDARPLLVFINAKSGGQLGPFLHRRLNMLLNPVQVFELGSCQGPDAGLDLCSKVKYFRVLVCGGDGTVAWVLDAIEKRNFESPPPVAILPLGTGNDLSRVLQWGRGISVVDGQGSLRTFLQDIDHAAVTMLDRWSVKIVEESTEKFPAREGHKFMMNYLGIGCDAKVAYEFHMMRQEKPEKFCSQFVNKLRYAKEGARDIMDRACADLPWQVWLEVDGKDIEIPKDSEGLIVLNIGSYMGGVDLWQNDYEHDDNFSIQCMHDKTLEVVCVRGAWHLGKLQVGLSQARRLAQGKVIRIHVSSPFPVQIDGEPFIQQPGCLEITHHGQVFMLRRASDEPRGHAAAIMNEVLLDAECKGVINASQKKVLLQQMALHLS</sequence>
<dbReference type="EC" id="2.7.1.107" evidence="4"/>
<dbReference type="EMBL" id="AY380783">
    <property type="protein sequence ID" value="AAR28755.1"/>
    <property type="molecule type" value="mRNA"/>
</dbReference>
<dbReference type="EMBL" id="AB005234">
    <property type="protein sequence ID" value="BAB10470.1"/>
    <property type="molecule type" value="Genomic_DNA"/>
</dbReference>
<dbReference type="EMBL" id="CP002688">
    <property type="protein sequence ID" value="AED97795.1"/>
    <property type="molecule type" value="Genomic_DNA"/>
</dbReference>
<dbReference type="EMBL" id="CP002688">
    <property type="protein sequence ID" value="AED97796.2"/>
    <property type="molecule type" value="Genomic_DNA"/>
</dbReference>
<dbReference type="EMBL" id="AY062655">
    <property type="protein sequence ID" value="AAL32733.1"/>
    <property type="molecule type" value="mRNA"/>
</dbReference>
<dbReference type="EMBL" id="BT008792">
    <property type="protein sequence ID" value="AAP68231.1"/>
    <property type="molecule type" value="mRNA"/>
</dbReference>
<dbReference type="EMBL" id="AK228735">
    <property type="protein sequence ID" value="BAF00636.1"/>
    <property type="molecule type" value="mRNA"/>
</dbReference>
<dbReference type="RefSeq" id="NP_001318872.1">
    <molecule id="Q9FFN7-1"/>
    <property type="nucleotide sequence ID" value="NM_001345610.1"/>
</dbReference>
<dbReference type="RefSeq" id="NP_201182.1">
    <molecule id="Q9FFN7-1"/>
    <property type="nucleotide sequence ID" value="NM_125772.5"/>
</dbReference>
<dbReference type="BioGRID" id="21739">
    <property type="interactions" value="2"/>
</dbReference>
<dbReference type="FunCoup" id="Q9FFN7">
    <property type="interactions" value="1396"/>
</dbReference>
<dbReference type="IntAct" id="Q9FFN7">
    <property type="interactions" value="3"/>
</dbReference>
<dbReference type="STRING" id="3702.Q9FFN7"/>
<dbReference type="SwissLipids" id="SLP:000001675"/>
<dbReference type="iPTMnet" id="Q9FFN7"/>
<dbReference type="PaxDb" id="3702-AT5G63770.1"/>
<dbReference type="ProteomicsDB" id="224035">
    <molecule id="Q9FFN7-1"/>
</dbReference>
<dbReference type="EnsemblPlants" id="AT5G63770.1">
    <molecule id="Q9FFN7-1"/>
    <property type="protein sequence ID" value="AT5G63770.1"/>
    <property type="gene ID" value="AT5G63770"/>
</dbReference>
<dbReference type="EnsemblPlants" id="AT5G63770.2">
    <molecule id="Q9FFN7-1"/>
    <property type="protein sequence ID" value="AT5G63770.2"/>
    <property type="gene ID" value="AT5G63770"/>
</dbReference>
<dbReference type="GeneID" id="836497"/>
<dbReference type="Gramene" id="AT5G63770.1">
    <molecule id="Q9FFN7-1"/>
    <property type="protein sequence ID" value="AT5G63770.1"/>
    <property type="gene ID" value="AT5G63770"/>
</dbReference>
<dbReference type="Gramene" id="AT5G63770.2">
    <molecule id="Q9FFN7-1"/>
    <property type="protein sequence ID" value="AT5G63770.2"/>
    <property type="gene ID" value="AT5G63770"/>
</dbReference>
<dbReference type="KEGG" id="ath:AT5G63770"/>
<dbReference type="Araport" id="AT5G63770"/>
<dbReference type="TAIR" id="AT5G63770">
    <property type="gene designation" value="DGK2"/>
</dbReference>
<dbReference type="eggNOG" id="KOG1169">
    <property type="taxonomic scope" value="Eukaryota"/>
</dbReference>
<dbReference type="InParanoid" id="Q9FFN7"/>
<dbReference type="OMA" id="MQPDCER"/>
<dbReference type="PhylomeDB" id="Q9FFN7"/>
<dbReference type="BioCyc" id="ARA:AT5G63770-MONOMER"/>
<dbReference type="BioCyc" id="MetaCyc:AT5G63770-MONOMER"/>
<dbReference type="BRENDA" id="2.7.1.107">
    <property type="organism ID" value="399"/>
</dbReference>
<dbReference type="SABIO-RK" id="Q9FFN7"/>
<dbReference type="PRO" id="PR:Q9FFN7"/>
<dbReference type="Proteomes" id="UP000006548">
    <property type="component" value="Chromosome 5"/>
</dbReference>
<dbReference type="ExpressionAtlas" id="Q9FFN7">
    <property type="expression patterns" value="baseline and differential"/>
</dbReference>
<dbReference type="GO" id="GO:0005783">
    <property type="term" value="C:endoplasmic reticulum"/>
    <property type="evidence" value="ECO:0007669"/>
    <property type="project" value="UniProtKB-SubCell"/>
</dbReference>
<dbReference type="GO" id="GO:0005524">
    <property type="term" value="F:ATP binding"/>
    <property type="evidence" value="ECO:0007669"/>
    <property type="project" value="UniProtKB-KW"/>
</dbReference>
<dbReference type="GO" id="GO:0004143">
    <property type="term" value="F:ATP-dependent diacylglycerol kinase activity"/>
    <property type="evidence" value="ECO:0000314"/>
    <property type="project" value="TAIR"/>
</dbReference>
<dbReference type="GO" id="GO:0008270">
    <property type="term" value="F:zinc ion binding"/>
    <property type="evidence" value="ECO:0007669"/>
    <property type="project" value="UniProtKB-KW"/>
</dbReference>
<dbReference type="GO" id="GO:0006952">
    <property type="term" value="P:defense response"/>
    <property type="evidence" value="ECO:0007669"/>
    <property type="project" value="UniProtKB-KW"/>
</dbReference>
<dbReference type="GO" id="GO:0048366">
    <property type="term" value="P:leaf development"/>
    <property type="evidence" value="ECO:0000315"/>
    <property type="project" value="TAIR"/>
</dbReference>
<dbReference type="GO" id="GO:0007200">
    <property type="term" value="P:phospholipase C-activating G protein-coupled receptor signaling pathway"/>
    <property type="evidence" value="ECO:0007669"/>
    <property type="project" value="InterPro"/>
</dbReference>
<dbReference type="GO" id="GO:0009409">
    <property type="term" value="P:response to cold"/>
    <property type="evidence" value="ECO:0000304"/>
    <property type="project" value="TAIR"/>
</dbReference>
<dbReference type="GO" id="GO:0009611">
    <property type="term" value="P:response to wounding"/>
    <property type="evidence" value="ECO:0000270"/>
    <property type="project" value="TAIR"/>
</dbReference>
<dbReference type="GO" id="GO:0048364">
    <property type="term" value="P:root development"/>
    <property type="evidence" value="ECO:0000315"/>
    <property type="project" value="TAIR"/>
</dbReference>
<dbReference type="CDD" id="cd00029">
    <property type="entry name" value="C1"/>
    <property type="match status" value="1"/>
</dbReference>
<dbReference type="CDD" id="cd20805">
    <property type="entry name" value="C1_DGK_rpt2"/>
    <property type="match status" value="1"/>
</dbReference>
<dbReference type="FunFam" id="2.60.200.40:FF:000006">
    <property type="entry name" value="Diacylglycerol kinase"/>
    <property type="match status" value="1"/>
</dbReference>
<dbReference type="FunFam" id="3.30.60.20:FF:000027">
    <property type="entry name" value="Diacylglycerol kinase"/>
    <property type="match status" value="1"/>
</dbReference>
<dbReference type="FunFam" id="3.40.50.10330:FF:000006">
    <property type="entry name" value="Diacylglycerol kinase"/>
    <property type="match status" value="1"/>
</dbReference>
<dbReference type="Gene3D" id="2.60.200.40">
    <property type="match status" value="1"/>
</dbReference>
<dbReference type="Gene3D" id="3.30.60.20">
    <property type="match status" value="1"/>
</dbReference>
<dbReference type="Gene3D" id="3.40.50.10330">
    <property type="entry name" value="Probable inorganic polyphosphate/atp-NAD kinase, domain 1"/>
    <property type="match status" value="1"/>
</dbReference>
<dbReference type="InterPro" id="IPR017438">
    <property type="entry name" value="ATP-NAD_kinase_N"/>
</dbReference>
<dbReference type="InterPro" id="IPR046349">
    <property type="entry name" value="C1-like_sf"/>
</dbReference>
<dbReference type="InterPro" id="IPR037607">
    <property type="entry name" value="DGK"/>
</dbReference>
<dbReference type="InterPro" id="IPR000756">
    <property type="entry name" value="Diacylglycerol_kin_accessory"/>
</dbReference>
<dbReference type="InterPro" id="IPR001206">
    <property type="entry name" value="Diacylglycerol_kinase_cat_dom"/>
</dbReference>
<dbReference type="InterPro" id="IPR016064">
    <property type="entry name" value="NAD/diacylglycerol_kinase_sf"/>
</dbReference>
<dbReference type="InterPro" id="IPR002219">
    <property type="entry name" value="PE/DAG-bd"/>
</dbReference>
<dbReference type="PANTHER" id="PTHR11255">
    <property type="entry name" value="DIACYLGLYCEROL KINASE"/>
    <property type="match status" value="1"/>
</dbReference>
<dbReference type="PANTHER" id="PTHR11255:SF104">
    <property type="entry name" value="DIACYLGLYCEROL KINASE 2"/>
    <property type="match status" value="1"/>
</dbReference>
<dbReference type="Pfam" id="PF00130">
    <property type="entry name" value="C1_1"/>
    <property type="match status" value="1"/>
</dbReference>
<dbReference type="Pfam" id="PF00609">
    <property type="entry name" value="DAGK_acc"/>
    <property type="match status" value="1"/>
</dbReference>
<dbReference type="Pfam" id="PF00781">
    <property type="entry name" value="DAGK_cat"/>
    <property type="match status" value="1"/>
</dbReference>
<dbReference type="SMART" id="SM00109">
    <property type="entry name" value="C1"/>
    <property type="match status" value="2"/>
</dbReference>
<dbReference type="SMART" id="SM00045">
    <property type="entry name" value="DAGKa"/>
    <property type="match status" value="1"/>
</dbReference>
<dbReference type="SMART" id="SM00046">
    <property type="entry name" value="DAGKc"/>
    <property type="match status" value="1"/>
</dbReference>
<dbReference type="SUPFAM" id="SSF57889">
    <property type="entry name" value="Cysteine-rich domain"/>
    <property type="match status" value="1"/>
</dbReference>
<dbReference type="SUPFAM" id="SSF111331">
    <property type="entry name" value="NAD kinase/diacylglycerol kinase-like"/>
    <property type="match status" value="1"/>
</dbReference>
<dbReference type="PROSITE" id="PS50146">
    <property type="entry name" value="DAGK"/>
    <property type="match status" value="1"/>
</dbReference>
<dbReference type="PROSITE" id="PS50081">
    <property type="entry name" value="ZF_DAG_PE_2"/>
    <property type="match status" value="2"/>
</dbReference>
<gene>
    <name evidence="8" type="primary">DGK2</name>
    <name evidence="12" type="ordered locus">At5g63770</name>
    <name evidence="13" type="ORF">MBK5.25</name>
</gene>
<comment type="function">
    <text evidence="4 5 6 7 10 11">Phosphorylates the second messenger diacylglycerol (DAG) to generate phosphatidic acid (PA), another important signaling molecule (PubMed:14665624). PA is required for plant development and responses to abiotic stress and pathogen attack (Probable). May be involved in the accumulation of PA during cold stress (Probable). Involved in response to freezing stress by modulating the accumulation of PA (PubMed:29853600). Exhibits high specificity for the unsaturated DAG analogs 1-stearoyl-2-arachidonoyl-sn-glycerol (1,2-SAG) and 1,2-dioleoyl-sn-glycerol (1,2-DOG) (PubMed:14665624, PubMed:16081412). Exhibits high specificity for 1-palmitoyl, 2-oleoyl-sn-glycerol (1,2 POG), 1-stearoyl, 2-linoleoyl-sn-glycerol (1,2-SLG) and 1-oleoyl, 2-palmitoyl-sn-glycerol (1,2-OPG) (PubMed:16081412). Has almost no activity toward 1,2-dioctanoyl-sn-glycerol (1,2-DOCG), 1,2-dipalmitoyl-sn-glycerol (1,2-DPG), 1,2-dimyristoyl-sn-glycerol (1,2-DMG) and 1-oleoyl-2-acetyl-sn-glycerol (1,2-OAG) (PubMed:16081412). Functions together with DGK4 in male gametophyte development and biosynthesis of phosphatidylglycerol and phosphatidylinositol in the endoplasmic reticulum (ER) (PubMed:32471859). Involved in PA production for pollen grain growth, as well as leaf and root growth (PubMed:32471859).</text>
</comment>
<comment type="catalytic activity">
    <reaction evidence="4">
        <text>a 1,2-diacyl-sn-glycerol + ATP = a 1,2-diacyl-sn-glycero-3-phosphate + ADP + H(+)</text>
        <dbReference type="Rhea" id="RHEA:10272"/>
        <dbReference type="ChEBI" id="CHEBI:15378"/>
        <dbReference type="ChEBI" id="CHEBI:17815"/>
        <dbReference type="ChEBI" id="CHEBI:30616"/>
        <dbReference type="ChEBI" id="CHEBI:58608"/>
        <dbReference type="ChEBI" id="CHEBI:456216"/>
        <dbReference type="EC" id="2.7.1.107"/>
    </reaction>
    <physiologicalReaction direction="left-to-right" evidence="4">
        <dbReference type="Rhea" id="RHEA:10273"/>
    </physiologicalReaction>
</comment>
<comment type="catalytic activity">
    <reaction evidence="4">
        <text>1-octadecanoyl-2-(5Z,8Z,11Z,14Z-eicosatetraenoyl)-sn-glycerol + ATP = 1-octadecanoyl-2-(5Z,8Z,11Z,14Z-eicosatetraenoyl)-sn-glycero-3-phosphate + ADP + H(+)</text>
        <dbReference type="Rhea" id="RHEA:40323"/>
        <dbReference type="ChEBI" id="CHEBI:15378"/>
        <dbReference type="ChEBI" id="CHEBI:30616"/>
        <dbReference type="ChEBI" id="CHEBI:75728"/>
        <dbReference type="ChEBI" id="CHEBI:77091"/>
        <dbReference type="ChEBI" id="CHEBI:456216"/>
    </reaction>
    <physiologicalReaction direction="left-to-right" evidence="4">
        <dbReference type="Rhea" id="RHEA:40324"/>
    </physiologicalReaction>
</comment>
<comment type="catalytic activity">
    <reaction evidence="4">
        <text>1,2-di-(9Z-octadecenoyl)-sn-glycerol + ATP = 1,2-di-(9Z-octadecenoyl)-sn-glycero-3-phosphate + ADP + H(+)</text>
        <dbReference type="Rhea" id="RHEA:40327"/>
        <dbReference type="ChEBI" id="CHEBI:15378"/>
        <dbReference type="ChEBI" id="CHEBI:30616"/>
        <dbReference type="ChEBI" id="CHEBI:52333"/>
        <dbReference type="ChEBI" id="CHEBI:74546"/>
        <dbReference type="ChEBI" id="CHEBI:456216"/>
    </reaction>
    <physiologicalReaction direction="left-to-right" evidence="4">
        <dbReference type="Rhea" id="RHEA:40328"/>
    </physiologicalReaction>
</comment>
<comment type="biophysicochemical properties">
    <kinetics>
        <KM evidence="4">125 uM for 1,2-dioleoyl-sn-glycerol</KM>
        <Vmax evidence="4">0.25 pmol/min/ug enzyme toward 1,2-dioleoyl-sn-glycerol</Vmax>
    </kinetics>
    <phDependence>
        <text evidence="4">Optimum pH is 7.2.</text>
    </phDependence>
</comment>
<comment type="subunit">
    <text evidence="1">Monomer.</text>
</comment>
<comment type="subcellular location">
    <subcellularLocation>
        <location evidence="7">Endoplasmic reticulum</location>
    </subcellularLocation>
</comment>
<comment type="alternative products">
    <event type="alternative splicing"/>
    <isoform>
        <id>Q9FFN7-1</id>
        <name>1</name>
        <sequence type="displayed"/>
    </isoform>
    <text>A number of isoforms are produced. According to EST sequences.</text>
</comment>
<comment type="tissue specificity">
    <text evidence="4">Expressed in rosette and cauline leaves, flowers, siliques and roots. Highly expressed in young leaves and at lower levels in older leaves. In young seedlings, expressed at the root-shoot junction zone and vascular bundles of the cotyledons. In older plants, expressed in root tip, central cylinder, root hair, leaf mesophyll cells and guard cells, sepals, filaments of the anthers, stigma, valves of young and early adult siliques and hilum of seeds.</text>
</comment>
<comment type="induction">
    <text evidence="4 5">Induced by cold stress (PubMed:14665624). Induced by wounding (PubMed:16081412).</text>
</comment>
<comment type="disruption phenotype">
    <text evidence="7">No visible phenotype under normal growth conditions, but the double mutants dgk2 and dgk4 exhibit defective pollen growth and seed development because of non-viable male gametophyte.</text>
</comment>
<comment type="similarity">
    <text evidence="9">Belongs to the eukaryotic diacylglycerol kinase family.</text>
</comment>
<keyword id="KW-0025">Alternative splicing</keyword>
<keyword id="KW-0067">ATP-binding</keyword>
<keyword id="KW-0256">Endoplasmic reticulum</keyword>
<keyword id="KW-0418">Kinase</keyword>
<keyword id="KW-0479">Metal-binding</keyword>
<keyword id="KW-0547">Nucleotide-binding</keyword>
<keyword id="KW-0611">Plant defense</keyword>
<keyword id="KW-1185">Reference proteome</keyword>
<keyword id="KW-0677">Repeat</keyword>
<keyword id="KW-0346">Stress response</keyword>
<keyword id="KW-0808">Transferase</keyword>
<keyword id="KW-0862">Zinc</keyword>
<keyword id="KW-0863">Zinc-finger</keyword>
<organism>
    <name type="scientific">Arabidopsis thaliana</name>
    <name type="common">Mouse-ear cress</name>
    <dbReference type="NCBI Taxonomy" id="3702"/>
    <lineage>
        <taxon>Eukaryota</taxon>
        <taxon>Viridiplantae</taxon>
        <taxon>Streptophyta</taxon>
        <taxon>Embryophyta</taxon>
        <taxon>Tracheophyta</taxon>
        <taxon>Spermatophyta</taxon>
        <taxon>Magnoliopsida</taxon>
        <taxon>eudicotyledons</taxon>
        <taxon>Gunneridae</taxon>
        <taxon>Pentapetalae</taxon>
        <taxon>rosids</taxon>
        <taxon>malvids</taxon>
        <taxon>Brassicales</taxon>
        <taxon>Brassicaceae</taxon>
        <taxon>Camelineae</taxon>
        <taxon>Arabidopsis</taxon>
    </lineage>
</organism>
<feature type="chain" id="PRO_0000422110" description="Diacylglycerol kinase 2">
    <location>
        <begin position="1"/>
        <end position="712"/>
    </location>
</feature>
<feature type="domain" description="DAGKc" evidence="3">
    <location>
        <begin position="338"/>
        <end position="479"/>
    </location>
</feature>
<feature type="zinc finger region" description="Phorbol-ester/DAG-type 1" evidence="2">
    <location>
        <begin position="72"/>
        <end position="133"/>
    </location>
</feature>
<feature type="zinc finger region" description="Phorbol-ester/DAG-type 2" evidence="2">
    <location>
        <begin position="145"/>
        <end position="208"/>
    </location>
</feature>
<protein>
    <recommendedName>
        <fullName evidence="8">Diacylglycerol kinase 2</fullName>
        <shortName evidence="8">AtDGK2</shortName>
        <shortName evidence="9">DAG kinase 2</shortName>
        <ecNumber evidence="4">2.7.1.107</ecNumber>
    </recommendedName>
    <alternativeName>
        <fullName evidence="9">Diglyceride kinase 2</fullName>
        <shortName evidence="9">DGK 2</shortName>
    </alternativeName>
</protein>
<evidence type="ECO:0000250" key="1">
    <source>
        <dbReference type="UniProtKB" id="P23743"/>
    </source>
</evidence>
<evidence type="ECO:0000255" key="2">
    <source>
        <dbReference type="PROSITE-ProRule" id="PRU00226"/>
    </source>
</evidence>
<evidence type="ECO:0000255" key="3">
    <source>
        <dbReference type="PROSITE-ProRule" id="PRU00783"/>
    </source>
</evidence>
<evidence type="ECO:0000269" key="4">
    <source>
    </source>
</evidence>
<evidence type="ECO:0000269" key="5">
    <source>
    </source>
</evidence>
<evidence type="ECO:0000269" key="6">
    <source>
    </source>
</evidence>
<evidence type="ECO:0000269" key="7">
    <source>
    </source>
</evidence>
<evidence type="ECO:0000303" key="8">
    <source>
    </source>
</evidence>
<evidence type="ECO:0000305" key="9"/>
<evidence type="ECO:0000305" key="10">
    <source>
    </source>
</evidence>
<evidence type="ECO:0000305" key="11">
    <source>
    </source>
</evidence>
<evidence type="ECO:0000312" key="12">
    <source>
        <dbReference type="Araport" id="AT5G63770"/>
    </source>
</evidence>
<evidence type="ECO:0000312" key="13">
    <source>
        <dbReference type="EMBL" id="BAB10470.1"/>
    </source>
</evidence>
<reference key="1">
    <citation type="journal article" date="2004" name="J. Biol. Chem.">
        <title>AtDGK2, a novel diacylglycerol kinase from Arabidopsis thaliana, phosphorylates 1-stearoyl-2-arachidonoyl-sn-glycerol and 1,2-dioleoyl-sn-glycerol and exhibits cold-inducible gene expression.</title>
        <authorList>
            <person name="Gomez-Merino F.C."/>
            <person name="Brearley C.A."/>
            <person name="Ornatowska M."/>
            <person name="Abdel-Haliem M.E."/>
            <person name="Zanor M.I."/>
            <person name="Mueller-Roeber B."/>
        </authorList>
    </citation>
    <scope>NUCLEOTIDE SEQUENCE [MRNA]</scope>
    <scope>FUNCTION</scope>
    <scope>CATALYTIC ACTIVITY</scope>
    <scope>BIOPHYSICOCHEMICAL PROPERTIES</scope>
    <scope>TISSUE SPECIFICITY</scope>
    <scope>INDUCTION BY COLD</scope>
    <source>
        <strain>cv. C24</strain>
    </source>
</reference>
<reference key="2">
    <citation type="journal article" date="1997" name="DNA Res.">
        <title>Structural analysis of Arabidopsis thaliana chromosome 5. I. Sequence features of the 1.6 Mb regions covered by twenty physically assigned P1 clones.</title>
        <authorList>
            <person name="Sato S."/>
            <person name="Kotani H."/>
            <person name="Nakamura Y."/>
            <person name="Kaneko T."/>
            <person name="Asamizu E."/>
            <person name="Fukami M."/>
            <person name="Miyajima N."/>
            <person name="Tabata S."/>
        </authorList>
    </citation>
    <scope>NUCLEOTIDE SEQUENCE [LARGE SCALE GENOMIC DNA]</scope>
    <source>
        <strain>cv. Columbia</strain>
    </source>
</reference>
<reference key="3">
    <citation type="journal article" date="2017" name="Plant J.">
        <title>Araport11: a complete reannotation of the Arabidopsis thaliana reference genome.</title>
        <authorList>
            <person name="Cheng C.Y."/>
            <person name="Krishnakumar V."/>
            <person name="Chan A.P."/>
            <person name="Thibaud-Nissen F."/>
            <person name="Schobel S."/>
            <person name="Town C.D."/>
        </authorList>
    </citation>
    <scope>GENOME REANNOTATION</scope>
    <source>
        <strain>cv. Columbia</strain>
    </source>
</reference>
<reference key="4">
    <citation type="journal article" date="2003" name="Science">
        <title>Empirical analysis of transcriptional activity in the Arabidopsis genome.</title>
        <authorList>
            <person name="Yamada K."/>
            <person name="Lim J."/>
            <person name="Dale J.M."/>
            <person name="Chen H."/>
            <person name="Shinn P."/>
            <person name="Palm C.J."/>
            <person name="Southwick A.M."/>
            <person name="Wu H.C."/>
            <person name="Kim C.J."/>
            <person name="Nguyen M."/>
            <person name="Pham P.K."/>
            <person name="Cheuk R.F."/>
            <person name="Karlin-Newmann G."/>
            <person name="Liu S.X."/>
            <person name="Lam B."/>
            <person name="Sakano H."/>
            <person name="Wu T."/>
            <person name="Yu G."/>
            <person name="Miranda M."/>
            <person name="Quach H.L."/>
            <person name="Tripp M."/>
            <person name="Chang C.H."/>
            <person name="Lee J.M."/>
            <person name="Toriumi M.J."/>
            <person name="Chan M.M."/>
            <person name="Tang C.C."/>
            <person name="Onodera C.S."/>
            <person name="Deng J.M."/>
            <person name="Akiyama K."/>
            <person name="Ansari Y."/>
            <person name="Arakawa T."/>
            <person name="Banh J."/>
            <person name="Banno F."/>
            <person name="Bowser L."/>
            <person name="Brooks S.Y."/>
            <person name="Carninci P."/>
            <person name="Chao Q."/>
            <person name="Choy N."/>
            <person name="Enju A."/>
            <person name="Goldsmith A.D."/>
            <person name="Gurjal M."/>
            <person name="Hansen N.F."/>
            <person name="Hayashizaki Y."/>
            <person name="Johnson-Hopson C."/>
            <person name="Hsuan V.W."/>
            <person name="Iida K."/>
            <person name="Karnes M."/>
            <person name="Khan S."/>
            <person name="Koesema E."/>
            <person name="Ishida J."/>
            <person name="Jiang P.X."/>
            <person name="Jones T."/>
            <person name="Kawai J."/>
            <person name="Kamiya A."/>
            <person name="Meyers C."/>
            <person name="Nakajima M."/>
            <person name="Narusaka M."/>
            <person name="Seki M."/>
            <person name="Sakurai T."/>
            <person name="Satou M."/>
            <person name="Tamse R."/>
            <person name="Vaysberg M."/>
            <person name="Wallender E.K."/>
            <person name="Wong C."/>
            <person name="Yamamura Y."/>
            <person name="Yuan S."/>
            <person name="Shinozaki K."/>
            <person name="Davis R.W."/>
            <person name="Theologis A."/>
            <person name="Ecker J.R."/>
        </authorList>
    </citation>
    <scope>NUCLEOTIDE SEQUENCE [LARGE SCALE MRNA]</scope>
    <source>
        <strain>cv. Columbia</strain>
    </source>
</reference>
<reference key="5">
    <citation type="submission" date="2006-07" db="EMBL/GenBank/DDBJ databases">
        <title>Large-scale analysis of RIKEN Arabidopsis full-length (RAFL) cDNAs.</title>
        <authorList>
            <person name="Totoki Y."/>
            <person name="Seki M."/>
            <person name="Ishida J."/>
            <person name="Nakajima M."/>
            <person name="Enju A."/>
            <person name="Kamiya A."/>
            <person name="Narusaka M."/>
            <person name="Shin-i T."/>
            <person name="Nakagawa M."/>
            <person name="Sakamoto N."/>
            <person name="Oishi K."/>
            <person name="Kohara Y."/>
            <person name="Kobayashi M."/>
            <person name="Toyoda A."/>
            <person name="Sakaki Y."/>
            <person name="Sakurai T."/>
            <person name="Iida K."/>
            <person name="Akiyama K."/>
            <person name="Satou M."/>
            <person name="Toyoda T."/>
            <person name="Konagaya A."/>
            <person name="Carninci P."/>
            <person name="Kawai J."/>
            <person name="Hayashizaki Y."/>
            <person name="Shinozaki K."/>
        </authorList>
    </citation>
    <scope>NUCLEOTIDE SEQUENCE [LARGE SCALE MRNA]</scope>
    <source>
        <strain>cv. Columbia</strain>
    </source>
</reference>
<reference key="6">
    <citation type="journal article" date="2005" name="J. Biol. Chem.">
        <title>Arabidopsis AtDGK7, the smallest member of plant diacylglycerol kinases (DGKs), displays unique biochemical features and saturates at low substrate concentration: the DGK inhibitor R59022 differentially affects AtDGK2 and AtDGK7 activity in vitro and alters plant growth and development.</title>
        <authorList>
            <person name="Gomez-Merino F.C."/>
            <person name="Arana-Ceballos F.A."/>
            <person name="Trejo-Tellez L.I."/>
            <person name="Skirycz A."/>
            <person name="Brearley C.A."/>
            <person name="Doermann P."/>
            <person name="Mueller-Roeber B."/>
        </authorList>
    </citation>
    <scope>FUNCTION</scope>
    <scope>INDUCTION BY WOUNDING</scope>
</reference>
<reference key="7">
    <citation type="journal article" date="2013" name="Front. Plant Sci.">
        <title>Rapid phosphatidic acid accumulation in response to low temperature stress in Arabidopsis is generated through diacylglycerol kinase.</title>
        <authorList>
            <person name="Arisz S.A."/>
            <person name="van Wijk R."/>
            <person name="Roels W."/>
            <person name="Zhu J.K."/>
            <person name="Haring M.A."/>
            <person name="Munnik T."/>
        </authorList>
    </citation>
    <scope>FUNCTION</scope>
</reference>
<reference key="8">
    <citation type="journal article" date="2018" name="Plant Physiol.">
        <title>DIACYLGLYCEROL ACYLTRANSFERASE and DIACYLGLYCEROL KINASE modulate triacylglycerol and phosphatidic acid production in the plant response to freezing stress.</title>
        <authorList>
            <person name="Tan W.J."/>
            <person name="Yang Y.C."/>
            <person name="Zhou Y."/>
            <person name="Huang L.P."/>
            <person name="Xu L."/>
            <person name="Chen Q.F."/>
            <person name="Yu L.J."/>
            <person name="Xiao S."/>
        </authorList>
    </citation>
    <scope>FUNCTION</scope>
</reference>
<reference key="9">
    <citation type="journal article" date="2020" name="Plant Cell">
        <title>A pair of Arabidopsis diacylglycerol kinases essential for gametogenesis and ER phospholipid metabolism in leaves and flowers.</title>
        <authorList>
            <person name="Angkawijaya A.E."/>
            <person name="Nguyen V.C."/>
            <person name="Gunawan F."/>
            <person name="Nakamura Y."/>
        </authorList>
    </citation>
    <scope>FUNCTION</scope>
    <scope>SUBCELLULAR LOCATION</scope>
    <scope>DISRUPTION PHENOTYPE</scope>
</reference>
<proteinExistence type="evidence at protein level"/>